<feature type="chain" id="PRO_0000414666" description="Cell division protein FtsQ">
    <location>
        <begin position="1"/>
        <end position="243"/>
    </location>
</feature>
<feature type="topological domain" description="Cytoplasmic" evidence="1">
    <location>
        <begin position="1"/>
        <end position="19"/>
    </location>
</feature>
<feature type="transmembrane region" description="Helical" evidence="1">
    <location>
        <begin position="20"/>
        <end position="40"/>
    </location>
</feature>
<feature type="topological domain" description="Periplasmic" evidence="1">
    <location>
        <begin position="41"/>
        <end position="243"/>
    </location>
</feature>
<feature type="domain" description="POTRA" evidence="2">
    <location>
        <begin position="46"/>
        <end position="115"/>
    </location>
</feature>
<comment type="function">
    <text evidence="1">Essential cell division protein. May link together the upstream cell division proteins, which are predominantly cytoplasmic, with the downstream cell division proteins, which are predominantly periplasmic. May control correct divisome assembly.</text>
</comment>
<comment type="subunit">
    <text evidence="1">Part of a complex composed of FtsB, FtsL and FtsQ.</text>
</comment>
<comment type="subcellular location">
    <subcellularLocation>
        <location evidence="1">Cell inner membrane</location>
        <topology evidence="1">Single-pass type II membrane protein</topology>
    </subcellularLocation>
    <text evidence="1">Localizes to the division septum.</text>
</comment>
<comment type="similarity">
    <text evidence="1">Belongs to the FtsQ/DivIB family. FtsQ subfamily.</text>
</comment>
<gene>
    <name evidence="1" type="primary">ftsQ</name>
    <name type="ordered locus">CBU_0138</name>
</gene>
<reference key="1">
    <citation type="journal article" date="2003" name="Proc. Natl. Acad. Sci. U.S.A.">
        <title>Complete genome sequence of the Q-fever pathogen, Coxiella burnetii.</title>
        <authorList>
            <person name="Seshadri R."/>
            <person name="Paulsen I.T."/>
            <person name="Eisen J.A."/>
            <person name="Read T.D."/>
            <person name="Nelson K.E."/>
            <person name="Nelson W.C."/>
            <person name="Ward N.L."/>
            <person name="Tettelin H."/>
            <person name="Davidsen T.M."/>
            <person name="Beanan M.J."/>
            <person name="DeBoy R.T."/>
            <person name="Daugherty S.C."/>
            <person name="Brinkac L.M."/>
            <person name="Madupu R."/>
            <person name="Dodson R.J."/>
            <person name="Khouri H.M."/>
            <person name="Lee K.H."/>
            <person name="Carty H.A."/>
            <person name="Scanlan D."/>
            <person name="Heinzen R.A."/>
            <person name="Thompson H.A."/>
            <person name="Samuel J.E."/>
            <person name="Fraser C.M."/>
            <person name="Heidelberg J.F."/>
        </authorList>
    </citation>
    <scope>NUCLEOTIDE SEQUENCE [LARGE SCALE GENOMIC DNA]</scope>
    <source>
        <strain>RSA 493 / Nine Mile phase I</strain>
    </source>
</reference>
<dbReference type="EMBL" id="AE016828">
    <property type="protein sequence ID" value="AAO89702.1"/>
    <property type="molecule type" value="Genomic_DNA"/>
</dbReference>
<dbReference type="RefSeq" id="NP_819188.1">
    <property type="nucleotide sequence ID" value="NC_002971.4"/>
</dbReference>
<dbReference type="RefSeq" id="WP_005769491.1">
    <property type="nucleotide sequence ID" value="NZ_CDBG01000001.1"/>
</dbReference>
<dbReference type="SMR" id="Q83F15"/>
<dbReference type="STRING" id="227377.CBU_0138"/>
<dbReference type="EnsemblBacteria" id="AAO89702">
    <property type="protein sequence ID" value="AAO89702"/>
    <property type="gene ID" value="CBU_0138"/>
</dbReference>
<dbReference type="GeneID" id="1208009"/>
<dbReference type="KEGG" id="cbu:CBU_0138"/>
<dbReference type="PATRIC" id="fig|227377.7.peg.140"/>
<dbReference type="eggNOG" id="COG1589">
    <property type="taxonomic scope" value="Bacteria"/>
</dbReference>
<dbReference type="HOGENOM" id="CLU_064041_1_1_6"/>
<dbReference type="OrthoDB" id="9790370at2"/>
<dbReference type="Proteomes" id="UP000002671">
    <property type="component" value="Chromosome"/>
</dbReference>
<dbReference type="GO" id="GO:0032153">
    <property type="term" value="C:cell division site"/>
    <property type="evidence" value="ECO:0000318"/>
    <property type="project" value="GO_Central"/>
</dbReference>
<dbReference type="GO" id="GO:1990587">
    <property type="term" value="C:FtsQBL complex"/>
    <property type="evidence" value="ECO:0000318"/>
    <property type="project" value="GO_Central"/>
</dbReference>
<dbReference type="GO" id="GO:0005886">
    <property type="term" value="C:plasma membrane"/>
    <property type="evidence" value="ECO:0000318"/>
    <property type="project" value="GO_Central"/>
</dbReference>
<dbReference type="GO" id="GO:0000917">
    <property type="term" value="P:division septum assembly"/>
    <property type="evidence" value="ECO:0000318"/>
    <property type="project" value="GO_Central"/>
</dbReference>
<dbReference type="GO" id="GO:0043093">
    <property type="term" value="P:FtsZ-dependent cytokinesis"/>
    <property type="evidence" value="ECO:0000318"/>
    <property type="project" value="GO_Central"/>
</dbReference>
<dbReference type="Gene3D" id="3.40.50.11690">
    <property type="entry name" value="Cell division protein FtsQ/DivIB"/>
    <property type="match status" value="1"/>
</dbReference>
<dbReference type="Gene3D" id="3.10.20.310">
    <property type="entry name" value="membrane protein fhac"/>
    <property type="match status" value="1"/>
</dbReference>
<dbReference type="HAMAP" id="MF_00911">
    <property type="entry name" value="FtsQ_subfam"/>
    <property type="match status" value="1"/>
</dbReference>
<dbReference type="InterPro" id="IPR005548">
    <property type="entry name" value="Cell_div_FtsQ/DivIB_C"/>
</dbReference>
<dbReference type="InterPro" id="IPR026579">
    <property type="entry name" value="FtsQ"/>
</dbReference>
<dbReference type="InterPro" id="IPR045335">
    <property type="entry name" value="FtsQ_C_sf"/>
</dbReference>
<dbReference type="InterPro" id="IPR034746">
    <property type="entry name" value="POTRA"/>
</dbReference>
<dbReference type="InterPro" id="IPR013685">
    <property type="entry name" value="POTRA_FtsQ_type"/>
</dbReference>
<dbReference type="PANTHER" id="PTHR35851">
    <property type="entry name" value="CELL DIVISION PROTEIN FTSQ"/>
    <property type="match status" value="1"/>
</dbReference>
<dbReference type="PANTHER" id="PTHR35851:SF1">
    <property type="entry name" value="CELL DIVISION PROTEIN FTSQ"/>
    <property type="match status" value="1"/>
</dbReference>
<dbReference type="Pfam" id="PF03799">
    <property type="entry name" value="FtsQ_DivIB_C"/>
    <property type="match status" value="1"/>
</dbReference>
<dbReference type="Pfam" id="PF08478">
    <property type="entry name" value="POTRA_1"/>
    <property type="match status" value="1"/>
</dbReference>
<dbReference type="PROSITE" id="PS51779">
    <property type="entry name" value="POTRA"/>
    <property type="match status" value="1"/>
</dbReference>
<organism>
    <name type="scientific">Coxiella burnetii (strain RSA 493 / Nine Mile phase I)</name>
    <dbReference type="NCBI Taxonomy" id="227377"/>
    <lineage>
        <taxon>Bacteria</taxon>
        <taxon>Pseudomonadati</taxon>
        <taxon>Pseudomonadota</taxon>
        <taxon>Gammaproteobacteria</taxon>
        <taxon>Legionellales</taxon>
        <taxon>Coxiellaceae</taxon>
        <taxon>Coxiella</taxon>
    </lineage>
</organism>
<protein>
    <recommendedName>
        <fullName evidence="1">Cell division protein FtsQ</fullName>
    </recommendedName>
</protein>
<keyword id="KW-0131">Cell cycle</keyword>
<keyword id="KW-0132">Cell division</keyword>
<keyword id="KW-0997">Cell inner membrane</keyword>
<keyword id="KW-1003">Cell membrane</keyword>
<keyword id="KW-0472">Membrane</keyword>
<keyword id="KW-1185">Reference proteome</keyword>
<keyword id="KW-0812">Transmembrane</keyword>
<keyword id="KW-1133">Transmembrane helix</keyword>
<evidence type="ECO:0000255" key="1">
    <source>
        <dbReference type="HAMAP-Rule" id="MF_00911"/>
    </source>
</evidence>
<evidence type="ECO:0000255" key="2">
    <source>
        <dbReference type="PROSITE-ProRule" id="PRU01115"/>
    </source>
</evidence>
<name>FTSQ_COXBU</name>
<accession>Q83F15</accession>
<proteinExistence type="inferred from homology"/>
<sequence length="243" mass="27900">MKRYNAKRKTHRNLKSIKKLIPTVLALLAFVSLLAGIITLHNPKTLPFRQIKITVSSDHIKMAELKDIVVHHIQGGFFSFNASALQTALMSLPWVHDVSVRRIWPNELEIQVEEQRPIARWNQNELITQEGEIFSPPIETIPQNIPQLSGPNDSEENVLNRFQQFSQLLIPFHAAVTALSLTKRGAWSLILNGHTQIFLGRENIDQRFEQFVHLYPKIIGANINRVEHVDLRYSNGLAIQWKN</sequence>